<organism>
    <name type="scientific">Lactobacillus helveticus (strain DPC 4571)</name>
    <dbReference type="NCBI Taxonomy" id="405566"/>
    <lineage>
        <taxon>Bacteria</taxon>
        <taxon>Bacillati</taxon>
        <taxon>Bacillota</taxon>
        <taxon>Bacilli</taxon>
        <taxon>Lactobacillales</taxon>
        <taxon>Lactobacillaceae</taxon>
        <taxon>Lactobacillus</taxon>
    </lineage>
</organism>
<feature type="chain" id="PRO_1000071259" description="S-ribosylhomocysteine lyase">
    <location>
        <begin position="1"/>
        <end position="157"/>
    </location>
</feature>
<feature type="binding site" evidence="1">
    <location>
        <position position="54"/>
    </location>
    <ligand>
        <name>Fe cation</name>
        <dbReference type="ChEBI" id="CHEBI:24875"/>
    </ligand>
</feature>
<feature type="binding site" evidence="1">
    <location>
        <position position="58"/>
    </location>
    <ligand>
        <name>Fe cation</name>
        <dbReference type="ChEBI" id="CHEBI:24875"/>
    </ligand>
</feature>
<feature type="binding site" evidence="1">
    <location>
        <position position="124"/>
    </location>
    <ligand>
        <name>Fe cation</name>
        <dbReference type="ChEBI" id="CHEBI:24875"/>
    </ligand>
</feature>
<proteinExistence type="inferred from homology"/>
<protein>
    <recommendedName>
        <fullName evidence="1">S-ribosylhomocysteine lyase</fullName>
        <ecNumber evidence="1">4.4.1.21</ecNumber>
    </recommendedName>
    <alternativeName>
        <fullName evidence="1">AI-2 synthesis protein</fullName>
    </alternativeName>
    <alternativeName>
        <fullName evidence="1">Autoinducer-2 production protein LuxS</fullName>
    </alternativeName>
</protein>
<sequence length="157" mass="17524">MAKVESFTLDHTKVKAPYVRLITEETGKKGDVISNYDLRLVQPNTNAIPTAGLHTIEHLLAGLLRDRLDGVIDCSPFGCRTGFHLITWGKHSTTEVAKALKGSLEAIANDIEWKDVQGTDKYSCGNYRDHSLFSAKEWSKEILSQGISDQPFERHVI</sequence>
<comment type="function">
    <text evidence="1">Involved in the synthesis of autoinducer 2 (AI-2) which is secreted by bacteria and is used to communicate both the cell density and the metabolic potential of the environment. The regulation of gene expression in response to changes in cell density is called quorum sensing. Catalyzes the transformation of S-ribosylhomocysteine (RHC) to homocysteine (HC) and 4,5-dihydroxy-2,3-pentadione (DPD).</text>
</comment>
<comment type="catalytic activity">
    <reaction evidence="1">
        <text>S-(5-deoxy-D-ribos-5-yl)-L-homocysteine = (S)-4,5-dihydroxypentane-2,3-dione + L-homocysteine</text>
        <dbReference type="Rhea" id="RHEA:17753"/>
        <dbReference type="ChEBI" id="CHEBI:29484"/>
        <dbReference type="ChEBI" id="CHEBI:58195"/>
        <dbReference type="ChEBI" id="CHEBI:58199"/>
        <dbReference type="EC" id="4.4.1.21"/>
    </reaction>
</comment>
<comment type="cofactor">
    <cofactor evidence="1">
        <name>Fe cation</name>
        <dbReference type="ChEBI" id="CHEBI:24875"/>
    </cofactor>
    <text evidence="1">Binds 1 Fe cation per subunit.</text>
</comment>
<comment type="subunit">
    <text evidence="1">Homodimer.</text>
</comment>
<comment type="similarity">
    <text evidence="1">Belongs to the LuxS family.</text>
</comment>
<gene>
    <name evidence="1" type="primary">luxS</name>
    <name type="ordered locus">lhv_1913</name>
</gene>
<reference key="1">
    <citation type="journal article" date="2008" name="J. Bacteriol.">
        <title>Genome sequence of Lactobacillus helveticus: an organism distinguished by selective gene loss and IS element expansion.</title>
        <authorList>
            <person name="Callanan M."/>
            <person name="Kaleta P."/>
            <person name="O'Callaghan J."/>
            <person name="O'Sullivan O."/>
            <person name="Jordan K."/>
            <person name="McAuliffe O."/>
            <person name="Sangrador-Vegas A."/>
            <person name="Slattery L."/>
            <person name="Fitzgerald G.F."/>
            <person name="Beresford T."/>
            <person name="Ross R.P."/>
        </authorList>
    </citation>
    <scope>NUCLEOTIDE SEQUENCE [LARGE SCALE GENOMIC DNA]</scope>
    <source>
        <strain>DPC 4571</strain>
    </source>
</reference>
<name>LUXS_LACH4</name>
<keyword id="KW-0071">Autoinducer synthesis</keyword>
<keyword id="KW-0408">Iron</keyword>
<keyword id="KW-0456">Lyase</keyword>
<keyword id="KW-0479">Metal-binding</keyword>
<keyword id="KW-0673">Quorum sensing</keyword>
<evidence type="ECO:0000255" key="1">
    <source>
        <dbReference type="HAMAP-Rule" id="MF_00091"/>
    </source>
</evidence>
<dbReference type="EC" id="4.4.1.21" evidence="1"/>
<dbReference type="EMBL" id="CP000517">
    <property type="protein sequence ID" value="ABX27751.1"/>
    <property type="molecule type" value="Genomic_DNA"/>
</dbReference>
<dbReference type="RefSeq" id="WP_012212313.1">
    <property type="nucleotide sequence ID" value="NC_010080.1"/>
</dbReference>
<dbReference type="SMR" id="A8YXQ1"/>
<dbReference type="KEGG" id="lhe:lhv_1913"/>
<dbReference type="eggNOG" id="COG1854">
    <property type="taxonomic scope" value="Bacteria"/>
</dbReference>
<dbReference type="HOGENOM" id="CLU_107531_2_1_9"/>
<dbReference type="Proteomes" id="UP000000790">
    <property type="component" value="Chromosome"/>
</dbReference>
<dbReference type="GO" id="GO:0005506">
    <property type="term" value="F:iron ion binding"/>
    <property type="evidence" value="ECO:0007669"/>
    <property type="project" value="InterPro"/>
</dbReference>
<dbReference type="GO" id="GO:0043768">
    <property type="term" value="F:S-ribosylhomocysteine lyase activity"/>
    <property type="evidence" value="ECO:0007669"/>
    <property type="project" value="UniProtKB-UniRule"/>
</dbReference>
<dbReference type="GO" id="GO:0009372">
    <property type="term" value="P:quorum sensing"/>
    <property type="evidence" value="ECO:0007669"/>
    <property type="project" value="UniProtKB-UniRule"/>
</dbReference>
<dbReference type="Gene3D" id="3.30.1360.80">
    <property type="entry name" value="S-ribosylhomocysteinase (LuxS)"/>
    <property type="match status" value="1"/>
</dbReference>
<dbReference type="HAMAP" id="MF_00091">
    <property type="entry name" value="LuxS"/>
    <property type="match status" value="1"/>
</dbReference>
<dbReference type="InterPro" id="IPR037005">
    <property type="entry name" value="LuxS_sf"/>
</dbReference>
<dbReference type="InterPro" id="IPR011249">
    <property type="entry name" value="Metalloenz_LuxS/M16"/>
</dbReference>
<dbReference type="InterPro" id="IPR003815">
    <property type="entry name" value="S-ribosylhomocysteinase"/>
</dbReference>
<dbReference type="NCBIfam" id="NF002606">
    <property type="entry name" value="PRK02260.2-4"/>
    <property type="match status" value="1"/>
</dbReference>
<dbReference type="NCBIfam" id="NF002608">
    <property type="entry name" value="PRK02260.3-1"/>
    <property type="match status" value="1"/>
</dbReference>
<dbReference type="PANTHER" id="PTHR35799">
    <property type="entry name" value="S-RIBOSYLHOMOCYSTEINE LYASE"/>
    <property type="match status" value="1"/>
</dbReference>
<dbReference type="PANTHER" id="PTHR35799:SF1">
    <property type="entry name" value="S-RIBOSYLHOMOCYSTEINE LYASE"/>
    <property type="match status" value="1"/>
</dbReference>
<dbReference type="Pfam" id="PF02664">
    <property type="entry name" value="LuxS"/>
    <property type="match status" value="1"/>
</dbReference>
<dbReference type="PIRSF" id="PIRSF006160">
    <property type="entry name" value="AI2"/>
    <property type="match status" value="1"/>
</dbReference>
<dbReference type="PRINTS" id="PR01487">
    <property type="entry name" value="LUXSPROTEIN"/>
</dbReference>
<dbReference type="SUPFAM" id="SSF63411">
    <property type="entry name" value="LuxS/MPP-like metallohydrolase"/>
    <property type="match status" value="1"/>
</dbReference>
<accession>A8YXQ1</accession>